<protein>
    <recommendedName>
        <fullName evidence="2">Large ribosomal subunit protein uL22c</fullName>
    </recommendedName>
    <alternativeName>
        <fullName>50S ribosomal protein L22, chloroplastic</fullName>
    </alternativeName>
</protein>
<sequence>MESMGNNSPGPEIRALARNIRMSAHKARRVINQIRGRSYGQALMILELMPYGACYPISQLIHSAAANANHNMGLNKANLLVGRVEVNEGAVFKRIQPRAQGRGYPIQKPTCHITIVSEEISRSNDPIMSIESRKKGYVWRRK</sequence>
<gene>
    <name type="primary">rpl22</name>
</gene>
<evidence type="ECO:0000250" key="1"/>
<evidence type="ECO:0000305" key="2"/>
<feature type="chain" id="PRO_0000125322" description="Large ribosomal subunit protein uL22c">
    <location>
        <begin position="1"/>
        <end position="142"/>
    </location>
</feature>
<organism>
    <name type="scientific">Pinus thunbergii</name>
    <name type="common">Japanese black pine</name>
    <name type="synonym">Pinus thunbergiana</name>
    <dbReference type="NCBI Taxonomy" id="3350"/>
    <lineage>
        <taxon>Eukaryota</taxon>
        <taxon>Viridiplantae</taxon>
        <taxon>Streptophyta</taxon>
        <taxon>Embryophyta</taxon>
        <taxon>Tracheophyta</taxon>
        <taxon>Spermatophyta</taxon>
        <taxon>Pinopsida</taxon>
        <taxon>Pinidae</taxon>
        <taxon>Conifers I</taxon>
        <taxon>Pinales</taxon>
        <taxon>Pinaceae</taxon>
        <taxon>Pinus</taxon>
        <taxon>Pinus subgen. Pinus</taxon>
    </lineage>
</organism>
<comment type="function">
    <text evidence="1">This protein binds specifically to 23S rRNA.</text>
</comment>
<comment type="function">
    <text evidence="1">The globular domain of the protein is located near the polypeptide exit tunnel on the outside of the subunit, while an extended beta-hairpin is found that lines the wall of the exit tunnel in the center of the 70S ribosome.</text>
</comment>
<comment type="subunit">
    <text evidence="1">Part of the 50S ribosomal subunit.</text>
</comment>
<comment type="subcellular location">
    <subcellularLocation>
        <location>Plastid</location>
        <location>Chloroplast</location>
    </subcellularLocation>
</comment>
<comment type="similarity">
    <text evidence="2">Belongs to the universal ribosomal protein uL22 family.</text>
</comment>
<reference key="1">
    <citation type="journal article" date="1994" name="Proc. Natl. Acad. Sci. U.S.A.">
        <title>Loss of all ndh genes as determined by sequencing the entire chloroplast genome of the black pine Pinus thunbergii.</title>
        <authorList>
            <person name="Wakasugi T."/>
            <person name="Tsudzuki J."/>
            <person name="Ito S."/>
            <person name="Nakashima K."/>
            <person name="Tsudzuki T."/>
            <person name="Sugiura M."/>
        </authorList>
    </citation>
    <scope>NUCLEOTIDE SEQUENCE [LARGE SCALE GENOMIC DNA]</scope>
</reference>
<geneLocation type="chloroplast"/>
<dbReference type="EMBL" id="D17510">
    <property type="protein sequence ID" value="BAA04404.1"/>
    <property type="molecule type" value="Genomic_DNA"/>
</dbReference>
<dbReference type="PIR" id="T07527">
    <property type="entry name" value="T07527"/>
</dbReference>
<dbReference type="RefSeq" id="NP_042448.1">
    <property type="nucleotide sequence ID" value="NC_001631.1"/>
</dbReference>
<dbReference type="SMR" id="P52771"/>
<dbReference type="GeneID" id="809014"/>
<dbReference type="GO" id="GO:0009507">
    <property type="term" value="C:chloroplast"/>
    <property type="evidence" value="ECO:0007669"/>
    <property type="project" value="UniProtKB-SubCell"/>
</dbReference>
<dbReference type="GO" id="GO:0015934">
    <property type="term" value="C:large ribosomal subunit"/>
    <property type="evidence" value="ECO:0007669"/>
    <property type="project" value="InterPro"/>
</dbReference>
<dbReference type="GO" id="GO:0019843">
    <property type="term" value="F:rRNA binding"/>
    <property type="evidence" value="ECO:0007669"/>
    <property type="project" value="UniProtKB-UniRule"/>
</dbReference>
<dbReference type="GO" id="GO:0003735">
    <property type="term" value="F:structural constituent of ribosome"/>
    <property type="evidence" value="ECO:0007669"/>
    <property type="project" value="InterPro"/>
</dbReference>
<dbReference type="GO" id="GO:0006412">
    <property type="term" value="P:translation"/>
    <property type="evidence" value="ECO:0007669"/>
    <property type="project" value="UniProtKB-UniRule"/>
</dbReference>
<dbReference type="CDD" id="cd00336">
    <property type="entry name" value="Ribosomal_L22"/>
    <property type="match status" value="1"/>
</dbReference>
<dbReference type="Gene3D" id="3.90.470.10">
    <property type="entry name" value="Ribosomal protein L22/L17"/>
    <property type="match status" value="1"/>
</dbReference>
<dbReference type="HAMAP" id="MF_01331_B">
    <property type="entry name" value="Ribosomal_uL22_B"/>
    <property type="match status" value="1"/>
</dbReference>
<dbReference type="InterPro" id="IPR001063">
    <property type="entry name" value="Ribosomal_uL22"/>
</dbReference>
<dbReference type="InterPro" id="IPR005727">
    <property type="entry name" value="Ribosomal_uL22_bac/chlpt-type"/>
</dbReference>
<dbReference type="InterPro" id="IPR047867">
    <property type="entry name" value="Ribosomal_uL22_bac/org-type"/>
</dbReference>
<dbReference type="InterPro" id="IPR036394">
    <property type="entry name" value="Ribosomal_uL22_sf"/>
</dbReference>
<dbReference type="NCBIfam" id="TIGR01044">
    <property type="entry name" value="rplV_bact"/>
    <property type="match status" value="1"/>
</dbReference>
<dbReference type="PANTHER" id="PTHR13501">
    <property type="entry name" value="CHLOROPLAST 50S RIBOSOMAL PROTEIN L22-RELATED"/>
    <property type="match status" value="1"/>
</dbReference>
<dbReference type="PANTHER" id="PTHR13501:SF10">
    <property type="entry name" value="LARGE RIBOSOMAL SUBUNIT PROTEIN UL22M"/>
    <property type="match status" value="1"/>
</dbReference>
<dbReference type="Pfam" id="PF00237">
    <property type="entry name" value="Ribosomal_L22"/>
    <property type="match status" value="1"/>
</dbReference>
<dbReference type="SUPFAM" id="SSF54843">
    <property type="entry name" value="Ribosomal protein L22"/>
    <property type="match status" value="1"/>
</dbReference>
<proteinExistence type="inferred from homology"/>
<name>RK22_PINTH</name>
<accession>P52771</accession>
<keyword id="KW-0150">Chloroplast</keyword>
<keyword id="KW-0934">Plastid</keyword>
<keyword id="KW-0687">Ribonucleoprotein</keyword>
<keyword id="KW-0689">Ribosomal protein</keyword>
<keyword id="KW-0694">RNA-binding</keyword>
<keyword id="KW-0699">rRNA-binding</keyword>